<protein>
    <recommendedName>
        <fullName>Apolipoprotein E</fullName>
        <shortName>Apo-E</shortName>
    </recommendedName>
</protein>
<sequence length="317" mass="36065">MKVLWAALLVTFLAGCQAKVEQAVETEPEPELHQQAEWQSGQRWELALGRFWDYLRWVQTLSEQVQEELLSSQVTQELTALMDETMKELKAYKSELEEQLTPVAEETRARLSKELQAAQARLGADMEDVRGRLAQYRGEVQAMLGQSTEELRARLASHLRKLRKRLLRDADDLQKRLAVYQAGAREGAERGVSAIRERLGPLVEQGRVRAATVGSLAGQPLQERAQAWGERLRARMEEMGSRTRDRLDEVKEQVAEVRAKLEEQAQQIRLQAEAFQARLKSWFEPLVEDMQRQWAGLVEKVQAAMGTSAAPVPSDNH</sequence>
<comment type="function">
    <text evidence="1">APOE is an apolipoprotein, a protein associating with lipid particles, that mainly functions in lipoprotein-mediated lipid transport between organs via the plasma and interstitial fluids. APOE is a core component of plasma lipoproteins and is involved in their production, conversion and clearance. Apolipoproteins are amphipathic molecules that interact both with lipids of the lipoprotein particle core and the aqueous environment of the plasma. As such, APOE associates with chylomicrons, chylomicron remnants, very low density lipoproteins (VLDL) and intermediate density lipoproteins (IDL) but shows a preferential binding to high-density lipoproteins (HDL). It also binds a wide range of cellular receptors including the LDL receptor/LDLR, the LDL receptor-related proteins LRP1, LRP2 and LRP8 and the very low-density lipoprotein receptor/VLDLR that mediate the cellular uptake of the APOE-containing lipoprotein particles. Finally, APOE also has a heparin-binding activity and binds heparan-sulfate proteoglycans on the surface of cells, a property that supports the capture and the receptor-mediated uptake of APOE-containing lipoproteins by cells. A main function of APOE is to mediate lipoprotein clearance through the uptake of chylomicrons, VLDLs, and HDLs by hepatocytes. APOE is also involved in the biosynthesis by the liver of VLDLs as well as their uptake by peripheral tissues ensuring the delivery of triglycerides and energy storage in muscle, heart and adipose tissues. By participating in the lipoprotein-mediated distribution of lipids among tissues, APOE plays a critical role in plasma and tissues lipid homeostasis. APOE is also involved in two steps of reverse cholesterol transport, the HDLs-mediated transport of cholesterol from peripheral tissues to the liver, and thereby plays an important role in cholesterol homeostasis. First, it is functionally associated with ABCA1 in the biogenesis of HDLs in tissues. Second, it is enriched in circulating HDLs and mediates their uptake by hepatocytes. APOE also plays an important role in lipid transport in the central nervous system, regulating neuron survival and sprouting.</text>
</comment>
<comment type="subunit">
    <text evidence="1">Homotetramer. May interact with ABCA1; functionally associated with ABCA1 in the biogenesis of HDLs. May interact with APP/A4 amyloid-beta peptide; the interaction is extremely stable in vitro but its physiological significance is unclear. May interact with MAPT. May interact with MAP2. In the cerebrospinal fluid, interacts with secreted SORL1. Interacts with PMEL; this allows the loading of PMEL luminal fragment on ILVs to induce fibril nucleation.</text>
</comment>
<comment type="subcellular location">
    <subcellularLocation>
        <location evidence="1">Secreted</location>
    </subcellularLocation>
    <subcellularLocation>
        <location evidence="1">Secreted</location>
        <location evidence="1">Extracellular space</location>
    </subcellularLocation>
    <subcellularLocation>
        <location evidence="1">Secreted</location>
        <location evidence="1">Extracellular space</location>
        <location evidence="1">Extracellular matrix</location>
    </subcellularLocation>
    <subcellularLocation>
        <location evidence="1">Extracellular vesicle</location>
    </subcellularLocation>
    <subcellularLocation>
        <location evidence="1">Endosome</location>
        <location evidence="1">Multivesicular body</location>
    </subcellularLocation>
    <text evidence="1">In the plasma, APOE is associated with chylomicrons, chylomicrons remnants, VLDL, LDL and HDL lipoproteins. Lipid poor oligomeric APOE is associated with the extracellular matrix in a calcium- and heparan-sulfate proteoglycans-dependent manner. Lipidation induces the release from the extracellular matrix. Colocalizes with CD63 and PMEL at exosomes and in intraluminal vesicles within multivesicular endosomes.</text>
</comment>
<comment type="PTM">
    <text evidence="1">APOE exists as multiple glycosylated and sialylated glycoforms within cells and in plasma. The extent of glycosylation and sialylation are tissue and context specific.</text>
</comment>
<comment type="PTM">
    <text evidence="1">Glycated in plasma VLDL.</text>
</comment>
<comment type="PTM">
    <text evidence="1">Phosphorylated by FAM20C in the extracellular medium.</text>
</comment>
<comment type="similarity">
    <text evidence="4">Belongs to the apolipoprotein A1/A4/E family.</text>
</comment>
<name>APOE_GORGO</name>
<organism>
    <name type="scientific">Gorilla gorilla gorilla</name>
    <name type="common">Western lowland gorilla</name>
    <dbReference type="NCBI Taxonomy" id="9595"/>
    <lineage>
        <taxon>Eukaryota</taxon>
        <taxon>Metazoa</taxon>
        <taxon>Chordata</taxon>
        <taxon>Craniata</taxon>
        <taxon>Vertebrata</taxon>
        <taxon>Euteleostomi</taxon>
        <taxon>Mammalia</taxon>
        <taxon>Eutheria</taxon>
        <taxon>Euarchontoglires</taxon>
        <taxon>Primates</taxon>
        <taxon>Haplorrhini</taxon>
        <taxon>Catarrhini</taxon>
        <taxon>Hominidae</taxon>
        <taxon>Gorilla</taxon>
    </lineage>
</organism>
<gene>
    <name type="primary">APOE</name>
</gene>
<dbReference type="EMBL" id="AF200502">
    <property type="protein sequence ID" value="AAG28579.1"/>
    <property type="molecule type" value="Genomic_DNA"/>
</dbReference>
<dbReference type="EMBL" id="AF200500">
    <property type="protein sequence ID" value="AAG28579.1"/>
    <property type="status" value="JOINED"/>
    <property type="molecule type" value="Genomic_DNA"/>
</dbReference>
<dbReference type="EMBL" id="AF200501">
    <property type="protein sequence ID" value="AAG28579.1"/>
    <property type="status" value="JOINED"/>
    <property type="molecule type" value="Genomic_DNA"/>
</dbReference>
<dbReference type="SMR" id="Q9GLM8"/>
<dbReference type="FunCoup" id="Q9GLM8">
    <property type="interactions" value="41"/>
</dbReference>
<dbReference type="STRING" id="9593.ENSGGOP00000006232"/>
<dbReference type="eggNOG" id="ENOG502QVD6">
    <property type="taxonomic scope" value="Eukaryota"/>
</dbReference>
<dbReference type="InParanoid" id="Q9GLM8"/>
<dbReference type="Proteomes" id="UP000001519">
    <property type="component" value="Unplaced"/>
</dbReference>
<dbReference type="GO" id="GO:0042627">
    <property type="term" value="C:chylomicron"/>
    <property type="evidence" value="ECO:0000318"/>
    <property type="project" value="GO_Central"/>
</dbReference>
<dbReference type="GO" id="GO:0070062">
    <property type="term" value="C:extracellular exosome"/>
    <property type="evidence" value="ECO:0000250"/>
    <property type="project" value="UniProtKB"/>
</dbReference>
<dbReference type="GO" id="GO:0031012">
    <property type="term" value="C:extracellular matrix"/>
    <property type="evidence" value="ECO:0000250"/>
    <property type="project" value="UniProtKB"/>
</dbReference>
<dbReference type="GO" id="GO:0005615">
    <property type="term" value="C:extracellular space"/>
    <property type="evidence" value="ECO:0000250"/>
    <property type="project" value="UniProtKB"/>
</dbReference>
<dbReference type="GO" id="GO:1903561">
    <property type="term" value="C:extracellular vesicle"/>
    <property type="evidence" value="ECO:0000318"/>
    <property type="project" value="GO_Central"/>
</dbReference>
<dbReference type="GO" id="GO:0034364">
    <property type="term" value="C:high-density lipoprotein particle"/>
    <property type="evidence" value="ECO:0000250"/>
    <property type="project" value="UniProtKB"/>
</dbReference>
<dbReference type="GO" id="GO:0034363">
    <property type="term" value="C:intermediate-density lipoprotein particle"/>
    <property type="evidence" value="ECO:0000250"/>
    <property type="project" value="UniProtKB"/>
</dbReference>
<dbReference type="GO" id="GO:0034362">
    <property type="term" value="C:low-density lipoprotein particle"/>
    <property type="evidence" value="ECO:0000250"/>
    <property type="project" value="UniProtKB"/>
</dbReference>
<dbReference type="GO" id="GO:0097487">
    <property type="term" value="C:multivesicular body, internal vesicle"/>
    <property type="evidence" value="ECO:0000250"/>
    <property type="project" value="UniProtKB"/>
</dbReference>
<dbReference type="GO" id="GO:0034361">
    <property type="term" value="C:very-low-density lipoprotein particle"/>
    <property type="evidence" value="ECO:0000250"/>
    <property type="project" value="UniProtKB"/>
</dbReference>
<dbReference type="GO" id="GO:0001540">
    <property type="term" value="F:amyloid-beta binding"/>
    <property type="evidence" value="ECO:0000250"/>
    <property type="project" value="UniProtKB"/>
</dbReference>
<dbReference type="GO" id="GO:0120020">
    <property type="term" value="F:cholesterol transfer activity"/>
    <property type="evidence" value="ECO:0000318"/>
    <property type="project" value="GO_Central"/>
</dbReference>
<dbReference type="GO" id="GO:0043395">
    <property type="term" value="F:heparan sulfate proteoglycan binding"/>
    <property type="evidence" value="ECO:0000250"/>
    <property type="project" value="UniProtKB"/>
</dbReference>
<dbReference type="GO" id="GO:0008201">
    <property type="term" value="F:heparin binding"/>
    <property type="evidence" value="ECO:0000250"/>
    <property type="project" value="UniProtKB"/>
</dbReference>
<dbReference type="GO" id="GO:0042802">
    <property type="term" value="F:identical protein binding"/>
    <property type="evidence" value="ECO:0000250"/>
    <property type="project" value="UniProtKB"/>
</dbReference>
<dbReference type="GO" id="GO:0050750">
    <property type="term" value="F:low-density lipoprotein particle receptor binding"/>
    <property type="evidence" value="ECO:0000250"/>
    <property type="project" value="UniProtKB"/>
</dbReference>
<dbReference type="GO" id="GO:0060228">
    <property type="term" value="F:phosphatidylcholine-sterol O-acyltransferase activator activity"/>
    <property type="evidence" value="ECO:0000318"/>
    <property type="project" value="GO_Central"/>
</dbReference>
<dbReference type="GO" id="GO:0005543">
    <property type="term" value="F:phospholipid binding"/>
    <property type="evidence" value="ECO:0000318"/>
    <property type="project" value="GO_Central"/>
</dbReference>
<dbReference type="GO" id="GO:0055090">
    <property type="term" value="P:acylglycerol homeostasis"/>
    <property type="evidence" value="ECO:0000318"/>
    <property type="project" value="GO_Central"/>
</dbReference>
<dbReference type="GO" id="GO:0033344">
    <property type="term" value="P:cholesterol efflux"/>
    <property type="evidence" value="ECO:0000250"/>
    <property type="project" value="UniProtKB"/>
</dbReference>
<dbReference type="GO" id="GO:0008203">
    <property type="term" value="P:cholesterol metabolic process"/>
    <property type="evidence" value="ECO:0000318"/>
    <property type="project" value="GO_Central"/>
</dbReference>
<dbReference type="GO" id="GO:0034382">
    <property type="term" value="P:chylomicron remnant clearance"/>
    <property type="evidence" value="ECO:0000250"/>
    <property type="project" value="UniProtKB"/>
</dbReference>
<dbReference type="GO" id="GO:0034380">
    <property type="term" value="P:high-density lipoprotein particle assembly"/>
    <property type="evidence" value="ECO:0000250"/>
    <property type="project" value="UniProtKB"/>
</dbReference>
<dbReference type="GO" id="GO:0071831">
    <property type="term" value="P:intermediate-density lipoprotein particle clearance"/>
    <property type="evidence" value="ECO:0000250"/>
    <property type="project" value="UniProtKB"/>
</dbReference>
<dbReference type="GO" id="GO:0042158">
    <property type="term" value="P:lipoprotein biosynthetic process"/>
    <property type="evidence" value="ECO:0000250"/>
    <property type="project" value="UniProtKB"/>
</dbReference>
<dbReference type="GO" id="GO:0032438">
    <property type="term" value="P:melanosome organization"/>
    <property type="evidence" value="ECO:0000250"/>
    <property type="project" value="UniProtKB"/>
</dbReference>
<dbReference type="GO" id="GO:1905907">
    <property type="term" value="P:negative regulation of amyloid fibril formation"/>
    <property type="evidence" value="ECO:0000250"/>
    <property type="project" value="UniProtKB"/>
</dbReference>
<dbReference type="GO" id="GO:0031175">
    <property type="term" value="P:neuron projection development"/>
    <property type="evidence" value="ECO:0000250"/>
    <property type="project" value="UniProtKB"/>
</dbReference>
<dbReference type="GO" id="GO:0033700">
    <property type="term" value="P:phospholipid efflux"/>
    <property type="evidence" value="ECO:0000318"/>
    <property type="project" value="GO_Central"/>
</dbReference>
<dbReference type="GO" id="GO:1900223">
    <property type="term" value="P:positive regulation of amyloid-beta clearance"/>
    <property type="evidence" value="ECO:0000250"/>
    <property type="project" value="UniProtKB"/>
</dbReference>
<dbReference type="GO" id="GO:0071830">
    <property type="term" value="P:triglyceride-rich lipoprotein particle clearance"/>
    <property type="evidence" value="ECO:0000250"/>
    <property type="project" value="UniProtKB"/>
</dbReference>
<dbReference type="GO" id="GO:0034447">
    <property type="term" value="P:very-low-density lipoprotein particle clearance"/>
    <property type="evidence" value="ECO:0000250"/>
    <property type="project" value="UniProtKB"/>
</dbReference>
<dbReference type="FunFam" id="1.20.120.20:FF:000002">
    <property type="entry name" value="Apolipoprotein E"/>
    <property type="match status" value="1"/>
</dbReference>
<dbReference type="FunFam" id="1.20.120.20:FF:000003">
    <property type="entry name" value="Apolipoprotein E"/>
    <property type="match status" value="1"/>
</dbReference>
<dbReference type="Gene3D" id="1.20.120.20">
    <property type="entry name" value="Apolipoprotein"/>
    <property type="match status" value="2"/>
</dbReference>
<dbReference type="InterPro" id="IPR000074">
    <property type="entry name" value="ApoA_E"/>
</dbReference>
<dbReference type="InterPro" id="IPR050163">
    <property type="entry name" value="Apolipoprotein_A1/A4/E"/>
</dbReference>
<dbReference type="PANTHER" id="PTHR18976">
    <property type="entry name" value="APOLIPOPROTEIN"/>
    <property type="match status" value="1"/>
</dbReference>
<dbReference type="PANTHER" id="PTHR18976:SF2">
    <property type="entry name" value="APOLIPOPROTEIN E"/>
    <property type="match status" value="1"/>
</dbReference>
<dbReference type="Pfam" id="PF01442">
    <property type="entry name" value="Apolipoprotein"/>
    <property type="match status" value="1"/>
</dbReference>
<dbReference type="SUPFAM" id="SSF58113">
    <property type="entry name" value="Apolipoprotein A-I"/>
    <property type="match status" value="1"/>
</dbReference>
<evidence type="ECO:0000250" key="1">
    <source>
        <dbReference type="UniProtKB" id="P02649"/>
    </source>
</evidence>
<evidence type="ECO:0000250" key="2">
    <source>
        <dbReference type="UniProtKB" id="P08226"/>
    </source>
</evidence>
<evidence type="ECO:0000255" key="3"/>
<evidence type="ECO:0000305" key="4"/>
<feature type="signal peptide" evidence="3">
    <location>
        <begin position="1"/>
        <end position="18"/>
    </location>
</feature>
<feature type="chain" id="PRO_0000001986" description="Apolipoprotein E">
    <location>
        <begin position="19"/>
        <end position="317"/>
    </location>
</feature>
<feature type="repeat" description="1">
    <location>
        <begin position="80"/>
        <end position="101"/>
    </location>
</feature>
<feature type="repeat" description="2">
    <location>
        <begin position="102"/>
        <end position="123"/>
    </location>
</feature>
<feature type="repeat" description="3">
    <location>
        <begin position="124"/>
        <end position="145"/>
    </location>
</feature>
<feature type="repeat" description="4">
    <location>
        <begin position="146"/>
        <end position="167"/>
    </location>
</feature>
<feature type="repeat" description="5">
    <location>
        <begin position="168"/>
        <end position="189"/>
    </location>
</feature>
<feature type="repeat" description="6">
    <location>
        <begin position="190"/>
        <end position="211"/>
    </location>
</feature>
<feature type="repeat" description="7">
    <location>
        <begin position="212"/>
        <end position="233"/>
    </location>
</feature>
<feature type="repeat" description="8">
    <location>
        <begin position="234"/>
        <end position="255"/>
    </location>
</feature>
<feature type="region of interest" description="8 X 22 AA approximate tandem repeats">
    <location>
        <begin position="80"/>
        <end position="255"/>
    </location>
</feature>
<feature type="region of interest" description="LDL and other lipoprotein receptors binding" evidence="1">
    <location>
        <begin position="158"/>
        <end position="168"/>
    </location>
</feature>
<feature type="region of interest" description="Lipid-binding and lipoprotein association" evidence="1">
    <location>
        <begin position="210"/>
        <end position="290"/>
    </location>
</feature>
<feature type="region of interest" description="Homooligomerization" evidence="1">
    <location>
        <begin position="266"/>
        <end position="317"/>
    </location>
</feature>
<feature type="region of interest" description="Specificity for association with VLDL" evidence="1">
    <location>
        <begin position="278"/>
        <end position="290"/>
    </location>
</feature>
<feature type="binding site" evidence="1">
    <location>
        <begin position="162"/>
        <end position="165"/>
    </location>
    <ligand>
        <name>heparin</name>
        <dbReference type="ChEBI" id="CHEBI:28304"/>
    </ligand>
</feature>
<feature type="binding site" evidence="1">
    <location>
        <begin position="229"/>
        <end position="236"/>
    </location>
    <ligand>
        <name>heparin</name>
        <dbReference type="ChEBI" id="CHEBI:28304"/>
    </ligand>
</feature>
<feature type="modified residue" description="Methionine sulfoxide" evidence="2">
    <location>
        <position position="143"/>
    </location>
</feature>
<feature type="modified residue" description="Phosphoserine" evidence="1">
    <location>
        <position position="147"/>
    </location>
</feature>
<accession>Q9GLM8</accession>
<proteinExistence type="inferred from homology"/>
<reference key="1">
    <citation type="submission" date="1999-11" db="EMBL/GenBank/DDBJ databases">
        <title>APOE gene evolution in Hominoidea.</title>
        <authorList>
            <person name="Rogaev E.I."/>
            <person name="Dvorianchikov G.A."/>
            <person name="Riazanskaia N.N."/>
        </authorList>
    </citation>
    <scope>NUCLEOTIDE SEQUENCE [GENOMIC DNA]</scope>
</reference>
<keyword id="KW-0162">Chylomicron</keyword>
<keyword id="KW-0967">Endosome</keyword>
<keyword id="KW-0272">Extracellular matrix</keyword>
<keyword id="KW-0325">Glycoprotein</keyword>
<keyword id="KW-0345">HDL</keyword>
<keyword id="KW-0358">Heparin-binding</keyword>
<keyword id="KW-0445">Lipid transport</keyword>
<keyword id="KW-0446">Lipid-binding</keyword>
<keyword id="KW-0558">Oxidation</keyword>
<keyword id="KW-0597">Phosphoprotein</keyword>
<keyword id="KW-1185">Reference proteome</keyword>
<keyword id="KW-0677">Repeat</keyword>
<keyword id="KW-0964">Secreted</keyword>
<keyword id="KW-0732">Signal</keyword>
<keyword id="KW-0813">Transport</keyword>
<keyword id="KW-0850">VLDL</keyword>